<dbReference type="EC" id="2.1.2.9" evidence="1"/>
<dbReference type="EMBL" id="AE002098">
    <property type="protein sequence ID" value="AAF40570.1"/>
    <property type="molecule type" value="Genomic_DNA"/>
</dbReference>
<dbReference type="PIR" id="F81238">
    <property type="entry name" value="F81238"/>
</dbReference>
<dbReference type="RefSeq" id="NP_273169.1">
    <property type="nucleotide sequence ID" value="NC_003112.2"/>
</dbReference>
<dbReference type="RefSeq" id="WP_002224762.1">
    <property type="nucleotide sequence ID" value="NC_003112.2"/>
</dbReference>
<dbReference type="SMR" id="Q9K1K6"/>
<dbReference type="FunCoup" id="Q9K1K6">
    <property type="interactions" value="467"/>
</dbReference>
<dbReference type="STRING" id="122586.NMB0111"/>
<dbReference type="PaxDb" id="122586-NMB0111"/>
<dbReference type="KEGG" id="nme:NMB0111"/>
<dbReference type="PATRIC" id="fig|122586.8.peg.151"/>
<dbReference type="HOGENOM" id="CLU_033347_1_2_4"/>
<dbReference type="InParanoid" id="Q9K1K6"/>
<dbReference type="OrthoDB" id="9802815at2"/>
<dbReference type="Proteomes" id="UP000000425">
    <property type="component" value="Chromosome"/>
</dbReference>
<dbReference type="GO" id="GO:0005829">
    <property type="term" value="C:cytosol"/>
    <property type="evidence" value="ECO:0000318"/>
    <property type="project" value="GO_Central"/>
</dbReference>
<dbReference type="GO" id="GO:0004479">
    <property type="term" value="F:methionyl-tRNA formyltransferase activity"/>
    <property type="evidence" value="ECO:0000318"/>
    <property type="project" value="GO_Central"/>
</dbReference>
<dbReference type="GO" id="GO:0071951">
    <property type="term" value="P:conversion of methionyl-tRNA to N-formyl-methionyl-tRNA"/>
    <property type="evidence" value="ECO:0000318"/>
    <property type="project" value="GO_Central"/>
</dbReference>
<dbReference type="CDD" id="cd08646">
    <property type="entry name" value="FMT_core_Met-tRNA-FMT_N"/>
    <property type="match status" value="1"/>
</dbReference>
<dbReference type="CDD" id="cd08704">
    <property type="entry name" value="Met_tRNA_FMT_C"/>
    <property type="match status" value="1"/>
</dbReference>
<dbReference type="FunFam" id="3.40.50.12230:FF:000001">
    <property type="entry name" value="Methionyl-tRNA formyltransferase"/>
    <property type="match status" value="1"/>
</dbReference>
<dbReference type="Gene3D" id="3.40.50.12230">
    <property type="match status" value="1"/>
</dbReference>
<dbReference type="HAMAP" id="MF_00182">
    <property type="entry name" value="Formyl_trans"/>
    <property type="match status" value="1"/>
</dbReference>
<dbReference type="InterPro" id="IPR005794">
    <property type="entry name" value="Fmt"/>
</dbReference>
<dbReference type="InterPro" id="IPR005793">
    <property type="entry name" value="Formyl_trans_C"/>
</dbReference>
<dbReference type="InterPro" id="IPR002376">
    <property type="entry name" value="Formyl_transf_N"/>
</dbReference>
<dbReference type="InterPro" id="IPR036477">
    <property type="entry name" value="Formyl_transf_N_sf"/>
</dbReference>
<dbReference type="InterPro" id="IPR011034">
    <property type="entry name" value="Formyl_transferase-like_C_sf"/>
</dbReference>
<dbReference type="InterPro" id="IPR001555">
    <property type="entry name" value="GART_AS"/>
</dbReference>
<dbReference type="InterPro" id="IPR044135">
    <property type="entry name" value="Met-tRNA-FMT_C"/>
</dbReference>
<dbReference type="InterPro" id="IPR041711">
    <property type="entry name" value="Met-tRNA-FMT_N"/>
</dbReference>
<dbReference type="NCBIfam" id="TIGR00460">
    <property type="entry name" value="fmt"/>
    <property type="match status" value="1"/>
</dbReference>
<dbReference type="PANTHER" id="PTHR11138">
    <property type="entry name" value="METHIONYL-TRNA FORMYLTRANSFERASE"/>
    <property type="match status" value="1"/>
</dbReference>
<dbReference type="PANTHER" id="PTHR11138:SF5">
    <property type="entry name" value="METHIONYL-TRNA FORMYLTRANSFERASE, MITOCHONDRIAL"/>
    <property type="match status" value="1"/>
</dbReference>
<dbReference type="Pfam" id="PF02911">
    <property type="entry name" value="Formyl_trans_C"/>
    <property type="match status" value="1"/>
</dbReference>
<dbReference type="Pfam" id="PF00551">
    <property type="entry name" value="Formyl_trans_N"/>
    <property type="match status" value="1"/>
</dbReference>
<dbReference type="SUPFAM" id="SSF50486">
    <property type="entry name" value="FMT C-terminal domain-like"/>
    <property type="match status" value="1"/>
</dbReference>
<dbReference type="SUPFAM" id="SSF53328">
    <property type="entry name" value="Formyltransferase"/>
    <property type="match status" value="1"/>
</dbReference>
<dbReference type="PROSITE" id="PS00373">
    <property type="entry name" value="GART"/>
    <property type="match status" value="1"/>
</dbReference>
<keyword id="KW-0648">Protein biosynthesis</keyword>
<keyword id="KW-1185">Reference proteome</keyword>
<keyword id="KW-0808">Transferase</keyword>
<sequence>MKVIFAGTPDFAAAALRAVAAAGFEIPLVLTQPDRPKGRGMQLTAPPVKQAALELGLRVEQPEKLRNNAEALQMLKEVEADVMVVAAYGLILPQEVLDTPKHGCLNIHASLLPRWRGAAPIQRAIEAGDAETGVCIMQMDIGLDTGDVVSEHRYAIQPTDTANEVHDALMEIGAAAVVADLQQLQSKGRLNAVKQPEEGVTYAQKLSKEEARIDWSKSAAVIERKIRAFNPVPAAWVEYQGKPMKIRRAEVVAQQGAAGEVLSCSADGLVVACGENALKITELQPAGGRRMNIAAFAAGRHIEAGAKL</sequence>
<gene>
    <name evidence="1" type="primary">fmt</name>
    <name type="ordered locus">NMB0111</name>
</gene>
<feature type="chain" id="PRO_0000083004" description="Methionyl-tRNA formyltransferase">
    <location>
        <begin position="1"/>
        <end position="308"/>
    </location>
</feature>
<feature type="binding site" evidence="1">
    <location>
        <begin position="110"/>
        <end position="113"/>
    </location>
    <ligand>
        <name>(6S)-5,6,7,8-tetrahydrofolate</name>
        <dbReference type="ChEBI" id="CHEBI:57453"/>
    </ligand>
</feature>
<organism>
    <name type="scientific">Neisseria meningitidis serogroup B (strain ATCC BAA-335 / MC58)</name>
    <dbReference type="NCBI Taxonomy" id="122586"/>
    <lineage>
        <taxon>Bacteria</taxon>
        <taxon>Pseudomonadati</taxon>
        <taxon>Pseudomonadota</taxon>
        <taxon>Betaproteobacteria</taxon>
        <taxon>Neisseriales</taxon>
        <taxon>Neisseriaceae</taxon>
        <taxon>Neisseria</taxon>
    </lineage>
</organism>
<reference key="1">
    <citation type="journal article" date="2000" name="Science">
        <title>Complete genome sequence of Neisseria meningitidis serogroup B strain MC58.</title>
        <authorList>
            <person name="Tettelin H."/>
            <person name="Saunders N.J."/>
            <person name="Heidelberg J.F."/>
            <person name="Jeffries A.C."/>
            <person name="Nelson K.E."/>
            <person name="Eisen J.A."/>
            <person name="Ketchum K.A."/>
            <person name="Hood D.W."/>
            <person name="Peden J.F."/>
            <person name="Dodson R.J."/>
            <person name="Nelson W.C."/>
            <person name="Gwinn M.L."/>
            <person name="DeBoy R.T."/>
            <person name="Peterson J.D."/>
            <person name="Hickey E.K."/>
            <person name="Haft D.H."/>
            <person name="Salzberg S.L."/>
            <person name="White O."/>
            <person name="Fleischmann R.D."/>
            <person name="Dougherty B.A."/>
            <person name="Mason T.M."/>
            <person name="Ciecko A."/>
            <person name="Parksey D.S."/>
            <person name="Blair E."/>
            <person name="Cittone H."/>
            <person name="Clark E.B."/>
            <person name="Cotton M.D."/>
            <person name="Utterback T.R."/>
            <person name="Khouri H.M."/>
            <person name="Qin H."/>
            <person name="Vamathevan J.J."/>
            <person name="Gill J."/>
            <person name="Scarlato V."/>
            <person name="Masignani V."/>
            <person name="Pizza M."/>
            <person name="Grandi G."/>
            <person name="Sun L."/>
            <person name="Smith H.O."/>
            <person name="Fraser C.M."/>
            <person name="Moxon E.R."/>
            <person name="Rappuoli R."/>
            <person name="Venter J.C."/>
        </authorList>
    </citation>
    <scope>NUCLEOTIDE SEQUENCE [LARGE SCALE GENOMIC DNA]</scope>
    <source>
        <strain>ATCC BAA-335 / MC58</strain>
    </source>
</reference>
<protein>
    <recommendedName>
        <fullName evidence="1">Methionyl-tRNA formyltransferase</fullName>
        <ecNumber evidence="1">2.1.2.9</ecNumber>
    </recommendedName>
</protein>
<evidence type="ECO:0000255" key="1">
    <source>
        <dbReference type="HAMAP-Rule" id="MF_00182"/>
    </source>
</evidence>
<comment type="function">
    <text evidence="1">Attaches a formyl group to the free amino group of methionyl-tRNA(fMet). The formyl group appears to play a dual role in the initiator identity of N-formylmethionyl-tRNA by promoting its recognition by IF2 and preventing the misappropriation of this tRNA by the elongation apparatus.</text>
</comment>
<comment type="catalytic activity">
    <reaction evidence="1">
        <text>L-methionyl-tRNA(fMet) + (6R)-10-formyltetrahydrofolate = N-formyl-L-methionyl-tRNA(fMet) + (6S)-5,6,7,8-tetrahydrofolate + H(+)</text>
        <dbReference type="Rhea" id="RHEA:24380"/>
        <dbReference type="Rhea" id="RHEA-COMP:9952"/>
        <dbReference type="Rhea" id="RHEA-COMP:9953"/>
        <dbReference type="ChEBI" id="CHEBI:15378"/>
        <dbReference type="ChEBI" id="CHEBI:57453"/>
        <dbReference type="ChEBI" id="CHEBI:78530"/>
        <dbReference type="ChEBI" id="CHEBI:78844"/>
        <dbReference type="ChEBI" id="CHEBI:195366"/>
        <dbReference type="EC" id="2.1.2.9"/>
    </reaction>
</comment>
<comment type="similarity">
    <text evidence="1">Belongs to the Fmt family.</text>
</comment>
<accession>Q9K1K6</accession>
<name>FMT_NEIMB</name>
<proteinExistence type="inferred from homology"/>